<name>KCIP1_RAT</name>
<accession>Q8R426</accession>
<accession>Q793P9</accession>
<accession>Q8CIR1</accession>
<accession>Q8R425</accession>
<feature type="chain" id="PRO_0000073820" description="A-type potassium channel modulatory protein KCNIP1">
    <location>
        <begin position="1"/>
        <end position="227"/>
    </location>
</feature>
<feature type="domain" description="EF-hand 1; degenerate" evidence="12">
    <location>
        <begin position="38"/>
        <end position="94"/>
    </location>
</feature>
<feature type="domain" description="EF-hand 2" evidence="3">
    <location>
        <begin position="97"/>
        <end position="132"/>
    </location>
</feature>
<feature type="domain" description="EF-hand 3" evidence="3">
    <location>
        <begin position="133"/>
        <end position="168"/>
    </location>
</feature>
<feature type="domain" description="EF-hand 4" evidence="3">
    <location>
        <begin position="181"/>
        <end position="216"/>
    </location>
</feature>
<feature type="region of interest" description="Interaction with KCND2" evidence="7">
    <location>
        <begin position="214"/>
        <end position="227"/>
    </location>
</feature>
<feature type="binding site" evidence="3 7">
    <location>
        <position position="146"/>
    </location>
    <ligand>
        <name>Ca(2+)</name>
        <dbReference type="ChEBI" id="CHEBI:29108"/>
        <label>1</label>
    </ligand>
</feature>
<feature type="binding site" evidence="3 7">
    <location>
        <position position="148"/>
    </location>
    <ligand>
        <name>Ca(2+)</name>
        <dbReference type="ChEBI" id="CHEBI:29108"/>
        <label>1</label>
    </ligand>
</feature>
<feature type="binding site" evidence="3 7">
    <location>
        <position position="150"/>
    </location>
    <ligand>
        <name>Ca(2+)</name>
        <dbReference type="ChEBI" id="CHEBI:29108"/>
        <label>1</label>
    </ligand>
</feature>
<feature type="binding site" evidence="3 7">
    <location>
        <position position="152"/>
    </location>
    <ligand>
        <name>Ca(2+)</name>
        <dbReference type="ChEBI" id="CHEBI:29108"/>
        <label>1</label>
    </ligand>
</feature>
<feature type="binding site" evidence="3 7">
    <location>
        <position position="157"/>
    </location>
    <ligand>
        <name>Ca(2+)</name>
        <dbReference type="ChEBI" id="CHEBI:29108"/>
        <label>1</label>
    </ligand>
</feature>
<feature type="binding site" evidence="3 7">
    <location>
        <position position="194"/>
    </location>
    <ligand>
        <name>Ca(2+)</name>
        <dbReference type="ChEBI" id="CHEBI:29108"/>
        <label>2</label>
    </ligand>
</feature>
<feature type="binding site" evidence="3 7">
    <location>
        <position position="196"/>
    </location>
    <ligand>
        <name>Ca(2+)</name>
        <dbReference type="ChEBI" id="CHEBI:29108"/>
        <label>2</label>
    </ligand>
</feature>
<feature type="binding site" evidence="3 7">
    <location>
        <position position="198"/>
    </location>
    <ligand>
        <name>Ca(2+)</name>
        <dbReference type="ChEBI" id="CHEBI:29108"/>
        <label>2</label>
    </ligand>
</feature>
<feature type="binding site" evidence="3 7">
    <location>
        <position position="205"/>
    </location>
    <ligand>
        <name>Ca(2+)</name>
        <dbReference type="ChEBI" id="CHEBI:29108"/>
        <label>2</label>
    </ligand>
</feature>
<feature type="splice variant" id="VSP_015048" description="In isoform 2." evidence="9 11">
    <location>
        <begin position="21"/>
        <end position="31"/>
    </location>
</feature>
<feature type="mutagenesis site" description="Abolishes interaction with KCND2." evidence="7">
    <location>
        <begin position="214"/>
        <end position="227"/>
    </location>
</feature>
<feature type="sequence conflict" description="In Ref. 3; AAN34942." evidence="12" ref="3">
    <original>S</original>
    <variation>P</variation>
    <location>
        <position position="10"/>
    </location>
</feature>
<feature type="sequence conflict" description="In Ref. 1; BAB03308." evidence="12" ref="1">
    <original>D</original>
    <variation>E</variation>
    <location>
        <position position="37"/>
    </location>
</feature>
<feature type="sequence conflict" description="In Ref. 2; AAL92564/AAL92565." evidence="12" ref="2">
    <original>N</original>
    <variation>D</variation>
    <location>
        <position position="107"/>
    </location>
</feature>
<feature type="helix" evidence="14">
    <location>
        <begin position="51"/>
        <end position="56"/>
    </location>
</feature>
<feature type="helix" evidence="14">
    <location>
        <begin position="61"/>
        <end position="74"/>
    </location>
</feature>
<feature type="strand" evidence="14">
    <location>
        <begin position="78"/>
        <end position="80"/>
    </location>
</feature>
<feature type="helix" evidence="14">
    <location>
        <begin position="82"/>
        <end position="92"/>
    </location>
</feature>
<feature type="helix" evidence="14">
    <location>
        <begin position="99"/>
        <end position="109"/>
    </location>
</feature>
<feature type="helix" evidence="14">
    <location>
        <begin position="119"/>
        <end position="131"/>
    </location>
</feature>
<feature type="helix" evidence="14">
    <location>
        <begin position="134"/>
        <end position="145"/>
    </location>
</feature>
<feature type="helix" evidence="14">
    <location>
        <begin position="155"/>
        <end position="168"/>
    </location>
</feature>
<feature type="helix" evidence="14">
    <location>
        <begin position="183"/>
        <end position="193"/>
    </location>
</feature>
<feature type="strand" evidence="14">
    <location>
        <begin position="198"/>
        <end position="201"/>
    </location>
</feature>
<feature type="helix" evidence="14">
    <location>
        <begin position="203"/>
        <end position="209"/>
    </location>
</feature>
<feature type="helix" evidence="14">
    <location>
        <begin position="215"/>
        <end position="227"/>
    </location>
</feature>
<gene>
    <name evidence="13" type="primary">Kcnip1</name>
    <name evidence="10" type="synonym">Kchip1</name>
</gene>
<sequence length="227" mass="26817">MGAVMGTFSSLQTKQRRPSKDIAWWYYQYQRDKIEDDLEMTMVCHRPEGLEQLEAQTNFTKRELQVLYRGFKNECPSGVVNEETFKQIYAQFFPHGDASTYAHYLFNAFDTTQTGSVKFEDFVTALSILLRGTVHEKLRWTFNLYDINKDGYINKEEMMDIVKAIYDMMGKYTYPVLKEDTPRQHVDVFFQKMDKNKDGIVTLDEFLESCQEDDNIMRSLQLFQNVM</sequence>
<dbReference type="EMBL" id="AB046443">
    <property type="protein sequence ID" value="BAB03308.1"/>
    <property type="molecule type" value="mRNA"/>
</dbReference>
<dbReference type="EMBL" id="AY082657">
    <property type="protein sequence ID" value="AAL92564.1"/>
    <property type="molecule type" value="mRNA"/>
</dbReference>
<dbReference type="EMBL" id="AY082658">
    <property type="protein sequence ID" value="AAL92565.1"/>
    <property type="molecule type" value="mRNA"/>
</dbReference>
<dbReference type="EMBL" id="AY142709">
    <property type="protein sequence ID" value="AAN34942.1"/>
    <property type="molecule type" value="mRNA"/>
</dbReference>
<dbReference type="RefSeq" id="NP_001248318.1">
    <molecule id="Q8R426-1"/>
    <property type="nucleotide sequence ID" value="NM_001261389.2"/>
</dbReference>
<dbReference type="RefSeq" id="NP_075218.2">
    <molecule id="Q8R426-2"/>
    <property type="nucleotide sequence ID" value="NM_022929.3"/>
</dbReference>
<dbReference type="PDB" id="1S6C">
    <property type="method" value="X-ray"/>
    <property type="resolution" value="2.00 A"/>
    <property type="chains" value="A=45-227"/>
</dbReference>
<dbReference type="PDBsum" id="1S6C"/>
<dbReference type="SMR" id="Q8R426"/>
<dbReference type="BioGRID" id="249216">
    <property type="interactions" value="1"/>
</dbReference>
<dbReference type="CORUM" id="Q8R426"/>
<dbReference type="FunCoup" id="Q8R426">
    <property type="interactions" value="504"/>
</dbReference>
<dbReference type="IntAct" id="Q8R426">
    <property type="interactions" value="1"/>
</dbReference>
<dbReference type="STRING" id="10116.ENSRNOP00000007187"/>
<dbReference type="PaxDb" id="10116-ENSRNOP00000007187"/>
<dbReference type="ABCD" id="Q8R426">
    <property type="antibodies" value="1 sequenced antibody"/>
</dbReference>
<dbReference type="Ensembl" id="ENSRNOT00000007187.6">
    <molecule id="Q8R426-1"/>
    <property type="protein sequence ID" value="ENSRNOP00000007187.5"/>
    <property type="gene ID" value="ENSRNOG00000005365.9"/>
</dbReference>
<dbReference type="Ensembl" id="ENSRNOT00000083090.2">
    <molecule id="Q8R426-2"/>
    <property type="protein sequence ID" value="ENSRNOP00000074006.2"/>
    <property type="gene ID" value="ENSRNOG00000005365.9"/>
</dbReference>
<dbReference type="GeneID" id="65023"/>
<dbReference type="KEGG" id="rno:65023"/>
<dbReference type="UCSC" id="RGD:70886">
    <molecule id="Q8R426-1"/>
    <property type="organism name" value="rat"/>
</dbReference>
<dbReference type="AGR" id="RGD:70886"/>
<dbReference type="CTD" id="30820"/>
<dbReference type="RGD" id="70886">
    <property type="gene designation" value="Kcnip1"/>
</dbReference>
<dbReference type="eggNOG" id="KOG0044">
    <property type="taxonomic scope" value="Eukaryota"/>
</dbReference>
<dbReference type="GeneTree" id="ENSGT00940000158048"/>
<dbReference type="InParanoid" id="Q8R426"/>
<dbReference type="OrthoDB" id="191686at2759"/>
<dbReference type="PhylomeDB" id="Q8R426"/>
<dbReference type="TreeFam" id="TF318560"/>
<dbReference type="Reactome" id="R-RNO-5576894">
    <property type="pathway name" value="Phase 1 - inactivation of fast Na+ channels"/>
</dbReference>
<dbReference type="ChiTaRS" id="Kcnip1">
    <property type="organism name" value="rat"/>
</dbReference>
<dbReference type="EvolutionaryTrace" id="Q8R426"/>
<dbReference type="PRO" id="PR:Q8R426"/>
<dbReference type="Proteomes" id="UP000002494">
    <property type="component" value="Chromosome 10"/>
</dbReference>
<dbReference type="GO" id="GO:0005737">
    <property type="term" value="C:cytoplasm"/>
    <property type="evidence" value="ECO:0000250"/>
    <property type="project" value="UniProtKB"/>
</dbReference>
<dbReference type="GO" id="GO:0009898">
    <property type="term" value="C:cytoplasmic side of plasma membrane"/>
    <property type="evidence" value="ECO:0000250"/>
    <property type="project" value="UniProtKB"/>
</dbReference>
<dbReference type="GO" id="GO:0030425">
    <property type="term" value="C:dendrite"/>
    <property type="evidence" value="ECO:0000314"/>
    <property type="project" value="RGD"/>
</dbReference>
<dbReference type="GO" id="GO:0071196">
    <property type="term" value="C:Kv4.3-KChIP1 channel complex"/>
    <property type="evidence" value="ECO:0000266"/>
    <property type="project" value="RGD"/>
</dbReference>
<dbReference type="GO" id="GO:0043025">
    <property type="term" value="C:neuronal cell body"/>
    <property type="evidence" value="ECO:0000314"/>
    <property type="project" value="RGD"/>
</dbReference>
<dbReference type="GO" id="GO:0034705">
    <property type="term" value="C:potassium channel complex"/>
    <property type="evidence" value="ECO:0000314"/>
    <property type="project" value="RGD"/>
</dbReference>
<dbReference type="GO" id="GO:0008076">
    <property type="term" value="C:voltage-gated potassium channel complex"/>
    <property type="evidence" value="ECO:0000250"/>
    <property type="project" value="UniProtKB"/>
</dbReference>
<dbReference type="GO" id="GO:0005509">
    <property type="term" value="F:calcium ion binding"/>
    <property type="evidence" value="ECO:0000314"/>
    <property type="project" value="RGD"/>
</dbReference>
<dbReference type="GO" id="GO:0005267">
    <property type="term" value="F:potassium channel activity"/>
    <property type="evidence" value="ECO:0007669"/>
    <property type="project" value="UniProtKB-KW"/>
</dbReference>
<dbReference type="GO" id="GO:0015459">
    <property type="term" value="F:potassium channel regulator activity"/>
    <property type="evidence" value="ECO:0000314"/>
    <property type="project" value="RGD"/>
</dbReference>
<dbReference type="GO" id="GO:0044877">
    <property type="term" value="F:protein-containing complex binding"/>
    <property type="evidence" value="ECO:0000314"/>
    <property type="project" value="RGD"/>
</dbReference>
<dbReference type="GO" id="GO:0044325">
    <property type="term" value="F:transmembrane transporter binding"/>
    <property type="evidence" value="ECO:0000353"/>
    <property type="project" value="RGD"/>
</dbReference>
<dbReference type="GO" id="GO:0045760">
    <property type="term" value="P:positive regulation of action potential"/>
    <property type="evidence" value="ECO:0000314"/>
    <property type="project" value="RGD"/>
</dbReference>
<dbReference type="GO" id="GO:1901379">
    <property type="term" value="P:regulation of potassium ion transmembrane transport"/>
    <property type="evidence" value="ECO:0000250"/>
    <property type="project" value="UniProtKB"/>
</dbReference>
<dbReference type="GO" id="GO:0009966">
    <property type="term" value="P:regulation of signal transduction"/>
    <property type="evidence" value="ECO:0000318"/>
    <property type="project" value="GO_Central"/>
</dbReference>
<dbReference type="CDD" id="cd00051">
    <property type="entry name" value="EFh"/>
    <property type="match status" value="2"/>
</dbReference>
<dbReference type="FunFam" id="1.10.238.10:FF:000043">
    <property type="entry name" value="Kv channel-interacting protein 1 isoform 2"/>
    <property type="match status" value="1"/>
</dbReference>
<dbReference type="Gene3D" id="1.10.238.10">
    <property type="entry name" value="EF-hand"/>
    <property type="match status" value="1"/>
</dbReference>
<dbReference type="InterPro" id="IPR011992">
    <property type="entry name" value="EF-hand-dom_pair"/>
</dbReference>
<dbReference type="InterPro" id="IPR018247">
    <property type="entry name" value="EF_Hand_1_Ca_BS"/>
</dbReference>
<dbReference type="InterPro" id="IPR002048">
    <property type="entry name" value="EF_hand_dom"/>
</dbReference>
<dbReference type="InterPro" id="IPR028846">
    <property type="entry name" value="Recoverin"/>
</dbReference>
<dbReference type="PANTHER" id="PTHR23055">
    <property type="entry name" value="CALCIUM BINDING PROTEINS"/>
    <property type="match status" value="1"/>
</dbReference>
<dbReference type="PANTHER" id="PTHR23055:SF82">
    <property type="entry name" value="KV CHANNEL-INTERACTING PROTEIN 1"/>
    <property type="match status" value="1"/>
</dbReference>
<dbReference type="Pfam" id="PF13499">
    <property type="entry name" value="EF-hand_7"/>
    <property type="match status" value="1"/>
</dbReference>
<dbReference type="Pfam" id="PF13833">
    <property type="entry name" value="EF-hand_8"/>
    <property type="match status" value="1"/>
</dbReference>
<dbReference type="PRINTS" id="PR00450">
    <property type="entry name" value="RECOVERIN"/>
</dbReference>
<dbReference type="SMART" id="SM00054">
    <property type="entry name" value="EFh"/>
    <property type="match status" value="3"/>
</dbReference>
<dbReference type="SUPFAM" id="SSF47473">
    <property type="entry name" value="EF-hand"/>
    <property type="match status" value="1"/>
</dbReference>
<dbReference type="PROSITE" id="PS00018">
    <property type="entry name" value="EF_HAND_1"/>
    <property type="match status" value="2"/>
</dbReference>
<dbReference type="PROSITE" id="PS50222">
    <property type="entry name" value="EF_HAND_2"/>
    <property type="match status" value="3"/>
</dbReference>
<organism>
    <name type="scientific">Rattus norvegicus</name>
    <name type="common">Rat</name>
    <dbReference type="NCBI Taxonomy" id="10116"/>
    <lineage>
        <taxon>Eukaryota</taxon>
        <taxon>Metazoa</taxon>
        <taxon>Chordata</taxon>
        <taxon>Craniata</taxon>
        <taxon>Vertebrata</taxon>
        <taxon>Euteleostomi</taxon>
        <taxon>Mammalia</taxon>
        <taxon>Eutheria</taxon>
        <taxon>Euarchontoglires</taxon>
        <taxon>Glires</taxon>
        <taxon>Rodentia</taxon>
        <taxon>Myomorpha</taxon>
        <taxon>Muroidea</taxon>
        <taxon>Muridae</taxon>
        <taxon>Murinae</taxon>
        <taxon>Rattus</taxon>
    </lineage>
</organism>
<reference key="1">
    <citation type="journal article" date="2001" name="Biochem. Biophys. Res. Commun.">
        <title>Molecular cloning and expression of the novel splice variants of K(+) channel-interacting protein 2.</title>
        <authorList>
            <person name="Ohya S."/>
            <person name="Morohashi Y."/>
            <person name="Muraki K."/>
            <person name="Tomita T."/>
            <person name="Watanabe M."/>
            <person name="Iwatsubo T."/>
            <person name="Imaizumi Y."/>
        </authorList>
    </citation>
    <scope>NUCLEOTIDE SEQUENCE [MRNA] (ISOFORM 2)</scope>
    <source>
        <tissue>Brain</tissue>
    </source>
</reference>
<reference key="2">
    <citation type="submission" date="2002-03" db="EMBL/GenBank/DDBJ databases">
        <authorList>
            <person name="Takimoto K."/>
        </authorList>
    </citation>
    <scope>NUCLEOTIDE SEQUENCE [MRNA] (ISOFORMS 1 AND 2)</scope>
    <source>
        <strain>Sprague-Dawley</strain>
    </source>
</reference>
<reference key="3">
    <citation type="journal article" date="2003" name="Am. J. Physiol.">
        <title>Functional properties of a brain-specific NH2-terminally spliced modulator of Kv4 channels.</title>
        <authorList>
            <person name="Boland L.M."/>
            <person name="Jiang M."/>
            <person name="Lee S.Y."/>
            <person name="Fahrenkrug S.C."/>
            <person name="Harnett M.T."/>
            <person name="O'Grady S.M."/>
        </authorList>
    </citation>
    <scope>NUCLEOTIDE SEQUENCE [MRNA] (ISOFORM 1)</scope>
    <scope>FUNCTION</scope>
    <scope>TISSUE SPECIFICITY</scope>
    <source>
        <tissue>Brain</tissue>
    </source>
</reference>
<reference key="4">
    <citation type="journal article" date="2000" name="Nature">
        <title>Modulation of A-type potassium channels by a family of calcium sensors.</title>
        <authorList>
            <person name="An W.F."/>
            <person name="Bowlby M.R."/>
            <person name="Betty M."/>
            <person name="Cao J."/>
            <person name="Ling H.-P."/>
            <person name="Mendoza G."/>
            <person name="Hinson J.W."/>
            <person name="Mattsson K.I."/>
            <person name="Strassle B.W."/>
            <person name="Trimmer J.S."/>
            <person name="Rhodes K.J."/>
        </authorList>
    </citation>
    <scope>INTERACTION WITH KCND2 AND KCND3</scope>
    <scope>TISSUE SPECIFICITY</scope>
</reference>
<reference key="5">
    <citation type="journal article" date="2001" name="FEBS Lett.">
        <title>Different effects of the Ca(2+)-binding protein, KChIP1, on two Kv4 subfamily members, Kv4.1 and Kv4.2.</title>
        <authorList>
            <person name="Nakamura T.Y."/>
            <person name="Nandi S."/>
            <person name="Pountney D.J."/>
            <person name="Artman M."/>
            <person name="Rudy B."/>
            <person name="Coetzee W.A."/>
        </authorList>
    </citation>
    <scope>INTERACTION WITH KCND2</scope>
</reference>
<reference key="6">
    <citation type="journal article" date="2004" name="J. Neurosci.">
        <title>KChIPs and Kv4 alpha subunits as integral components of A-type potassium channels in mammalian brain.</title>
        <authorList>
            <person name="Rhodes K.J."/>
            <person name="Carroll K.I."/>
            <person name="Sung M.A."/>
            <person name="Doliveira L.C."/>
            <person name="Monaghan M.M."/>
            <person name="Burke S.L."/>
            <person name="Strassle B.W."/>
            <person name="Buchwalder L."/>
            <person name="Menegola M."/>
            <person name="Cao J."/>
            <person name="An W.F."/>
            <person name="Trimmer J.S."/>
        </authorList>
    </citation>
    <scope>TISSUE SPECIFICITY</scope>
    <scope>INTERACTION WITH KCND2</scope>
    <scope>SUBCELLULAR LOCATION</scope>
</reference>
<reference key="7">
    <citation type="journal article" date="2004" name="Neuron">
        <title>Structural insights into the functional interaction of KChIP1 with Shal-type K(+) channels.</title>
        <authorList>
            <person name="Zhou W."/>
            <person name="Qian Y."/>
            <person name="Kunjilwar K."/>
            <person name="Pfaffinger P.J."/>
            <person name="Choe S."/>
        </authorList>
    </citation>
    <scope>X-RAY CRYSTALLOGRAPHY (2.0 ANGSTROMS) OF 45-216 IN COMPLEX WITH CALCIUM IONS AND KCND2</scope>
    <scope>INTERACTION WITH KCND2</scope>
    <scope>CALCIUM-BINDING</scope>
    <scope>FUNCTION</scope>
    <scope>SUBCELLULAR LOCATION</scope>
    <scope>MUTAGENESIS OF 214-ASP--MET-227</scope>
</reference>
<comment type="function">
    <text evidence="2 6 7">Regulatory subunit of Kv4/D (Shal)-type voltage-gated rapidly inactivating A-type potassium channels (PubMed:14980206). Regulates channel density, inactivation kinetics and rate of recovery from inactivation in a calcium-dependent and isoform-specific manner (PubMed:14980206). Modulates KCND2/Kv4.2 currents (PubMed:14980206). In vitro, modulates KCND1/Kv4.1 currents (By similarity). Increases the presence of KCND2 at the cell surface (PubMed:14980206).</text>
</comment>
<comment type="subunit">
    <text evidence="1 2 4 5 7 8">Component of heteromultimeric potassium channels (PubMed:14980206, PubMed:15356203). Identified in potassium channel complexes containing KCND1, KCND2, KCND3, KCNIP1, KCNIP2, KCNIP3, KCNIP4, DPP6 and DPP10 (By similarity). Part of a heterooctamer composed of the tetrameric channel and four KCNIP1 chains (By similarity). Probably part of a complex consisting of KCNIP1, KCNIP2 isoform 3 and KCND2. Self-associates to form homodimers and homotetramers. Interacts with KCNIP2 isoform 3 in a calcium-dependent manner (By similarity). Interacts with KCND2; this interaction mediates the capture of both the N- and C-terminus of KCND2, thus preventing KCND2 N-type inactivation and modulates the channel gating kinetics (PubMed:10676964, PubMed:11423117, PubMed:14980206). Interacts with KCND3; each KCNIP1 monomer interacts with two adjacent KCND3 subunits, through both the N-terminal inactivation ball of a KCND3 subunit and a C-terminal helix from the adjacent KCND3 subunit, clamping them together; this interaction stabilizes the tetrameric form and modulates the channel gating kinetics namely channel activation and inactivation kinetics and rate of recovery from inactivation (PubMed:10676964).</text>
</comment>
<comment type="subcellular location">
    <subcellularLocation>
        <location evidence="7 8">Cell membrane</location>
        <topology evidence="7">Peripheral membrane protein</topology>
    </subcellularLocation>
    <subcellularLocation>
        <location evidence="7 8">Cytoplasm</location>
    </subcellularLocation>
    <subcellularLocation>
        <location evidence="8">Cell projection</location>
        <location evidence="8">Dendrite</location>
    </subcellularLocation>
</comment>
<comment type="alternative products">
    <event type="alternative splicing"/>
    <isoform>
        <id>Q8R426-1</id>
        <name>1</name>
        <name>KChIP1b</name>
        <sequence type="displayed"/>
    </isoform>
    <isoform>
        <id>Q8R426-2</id>
        <name>2</name>
        <name>KChIP1a</name>
        <sequence type="described" ref="VSP_015048"/>
    </isoform>
</comment>
<comment type="tissue specificity">
    <text evidence="4 6 8">Detected in hippocampus and in the molecular layer of the dentate gyrus (at protein level) (PubMed:15356203). Isoform 1 and isoform 2 are predominantly expressed at equal levels in brain. Colocalizes with KCND3 in inhibitory interneurons in cortex and hippocampus and in striatal interneurons.</text>
</comment>
<comment type="similarity">
    <text evidence="12">Belongs to the recoverin family.</text>
</comment>
<evidence type="ECO:0000250" key="1">
    <source>
        <dbReference type="UniProtKB" id="Q9JJ57"/>
    </source>
</evidence>
<evidence type="ECO:0000250" key="2">
    <source>
        <dbReference type="UniProtKB" id="Q9NZI2"/>
    </source>
</evidence>
<evidence type="ECO:0000255" key="3">
    <source>
        <dbReference type="PROSITE-ProRule" id="PRU00448"/>
    </source>
</evidence>
<evidence type="ECO:0000269" key="4">
    <source>
    </source>
</evidence>
<evidence type="ECO:0000269" key="5">
    <source>
    </source>
</evidence>
<evidence type="ECO:0000269" key="6">
    <source>
    </source>
</evidence>
<evidence type="ECO:0000269" key="7">
    <source>
    </source>
</evidence>
<evidence type="ECO:0000269" key="8">
    <source>
    </source>
</evidence>
<evidence type="ECO:0000303" key="9">
    <source>
    </source>
</evidence>
<evidence type="ECO:0000303" key="10">
    <source>
    </source>
</evidence>
<evidence type="ECO:0000303" key="11">
    <source ref="2"/>
</evidence>
<evidence type="ECO:0000305" key="12"/>
<evidence type="ECO:0000312" key="13">
    <source>
        <dbReference type="RGD" id="70886"/>
    </source>
</evidence>
<evidence type="ECO:0007829" key="14">
    <source>
        <dbReference type="PDB" id="1S6C"/>
    </source>
</evidence>
<protein>
    <recommendedName>
        <fullName evidence="12">A-type potassium channel modulatory protein KCNIP1</fullName>
    </recommendedName>
    <alternativeName>
        <fullName>Kv channel-interacting protein 1</fullName>
        <shortName evidence="10">KChIP1</shortName>
    </alternativeName>
    <alternativeName>
        <fullName>Potassium channel-interacting protein 1</fullName>
    </alternativeName>
</protein>
<proteinExistence type="evidence at protein level"/>
<keyword id="KW-0002">3D-structure</keyword>
<keyword id="KW-0025">Alternative splicing</keyword>
<keyword id="KW-0106">Calcium</keyword>
<keyword id="KW-1003">Cell membrane</keyword>
<keyword id="KW-0966">Cell projection</keyword>
<keyword id="KW-0963">Cytoplasm</keyword>
<keyword id="KW-0407">Ion channel</keyword>
<keyword id="KW-0406">Ion transport</keyword>
<keyword id="KW-0472">Membrane</keyword>
<keyword id="KW-0479">Metal-binding</keyword>
<keyword id="KW-0630">Potassium</keyword>
<keyword id="KW-0631">Potassium channel</keyword>
<keyword id="KW-0633">Potassium transport</keyword>
<keyword id="KW-1185">Reference proteome</keyword>
<keyword id="KW-0677">Repeat</keyword>
<keyword id="KW-0813">Transport</keyword>
<keyword id="KW-0851">Voltage-gated channel</keyword>